<reference key="1">
    <citation type="journal article" date="2000" name="Nature">
        <title>DNA sequence of both chromosomes of the cholera pathogen Vibrio cholerae.</title>
        <authorList>
            <person name="Heidelberg J.F."/>
            <person name="Eisen J.A."/>
            <person name="Nelson W.C."/>
            <person name="Clayton R.A."/>
            <person name="Gwinn M.L."/>
            <person name="Dodson R.J."/>
            <person name="Haft D.H."/>
            <person name="Hickey E.K."/>
            <person name="Peterson J.D."/>
            <person name="Umayam L.A."/>
            <person name="Gill S.R."/>
            <person name="Nelson K.E."/>
            <person name="Read T.D."/>
            <person name="Tettelin H."/>
            <person name="Richardson D.L."/>
            <person name="Ermolaeva M.D."/>
            <person name="Vamathevan J.J."/>
            <person name="Bass S."/>
            <person name="Qin H."/>
            <person name="Dragoi I."/>
            <person name="Sellers P."/>
            <person name="McDonald L.A."/>
            <person name="Utterback T.R."/>
            <person name="Fleischmann R.D."/>
            <person name="Nierman W.C."/>
            <person name="White O."/>
            <person name="Salzberg S.L."/>
            <person name="Smith H.O."/>
            <person name="Colwell R.R."/>
            <person name="Mekalanos J.J."/>
            <person name="Venter J.C."/>
            <person name="Fraser C.M."/>
        </authorList>
    </citation>
    <scope>NUCLEOTIDE SEQUENCE [LARGE SCALE GENOMIC DNA]</scope>
    <source>
        <strain>ATCC 39315 / El Tor Inaba N16961</strain>
    </source>
</reference>
<reference key="2">
    <citation type="journal article" date="2014" name="BMC Microbiol.">
        <title>A systematic analysis of the in vitro and in vivo functions of the HD-GYP domain proteins of Vibrio cholerae.</title>
        <authorList>
            <person name="McKee R.W."/>
            <person name="Kariisa A."/>
            <person name="Mudrak B."/>
            <person name="Whitaker C."/>
            <person name="Tamayo R."/>
        </authorList>
    </citation>
    <scope>FUNCTION</scope>
    <scope>CATALYTIC ACTIVITY</scope>
    <source>
        <strain>ATCC 39315 / El Tor Inaba N16961</strain>
    </source>
</reference>
<proteinExistence type="evidence at protein level"/>
<keyword id="KW-0973">c-di-GMP</keyword>
<keyword id="KW-0997">Cell inner membrane</keyword>
<keyword id="KW-1003">Cell membrane</keyword>
<keyword id="KW-0378">Hydrolase</keyword>
<keyword id="KW-0472">Membrane</keyword>
<keyword id="KW-1185">Reference proteome</keyword>
<keyword id="KW-0812">Transmembrane</keyword>
<keyword id="KW-1133">Transmembrane helix</keyword>
<dbReference type="EC" id="3.1.4.-" evidence="4"/>
<dbReference type="EMBL" id="AE003852">
    <property type="protein sequence ID" value="AAF94454.1"/>
    <property type="molecule type" value="Genomic_DNA"/>
</dbReference>
<dbReference type="PIR" id="C82217">
    <property type="entry name" value="C82217"/>
</dbReference>
<dbReference type="RefSeq" id="NP_230940.1">
    <property type="nucleotide sequence ID" value="NC_002505.1"/>
</dbReference>
<dbReference type="SMR" id="Q9KSG1"/>
<dbReference type="STRING" id="243277.VC_1295"/>
<dbReference type="DNASU" id="2614749"/>
<dbReference type="EnsemblBacteria" id="AAF94454">
    <property type="protein sequence ID" value="AAF94454"/>
    <property type="gene ID" value="VC_1295"/>
</dbReference>
<dbReference type="KEGG" id="vch:VC_1295"/>
<dbReference type="PATRIC" id="fig|243277.26.peg.1233"/>
<dbReference type="eggNOG" id="COG2770">
    <property type="taxonomic scope" value="Bacteria"/>
</dbReference>
<dbReference type="eggNOG" id="COG3437">
    <property type="taxonomic scope" value="Bacteria"/>
</dbReference>
<dbReference type="HOGENOM" id="CLU_044477_0_0_6"/>
<dbReference type="PHI-base" id="PHI:3232"/>
<dbReference type="Proteomes" id="UP000000584">
    <property type="component" value="Chromosome 1"/>
</dbReference>
<dbReference type="GO" id="GO:0005886">
    <property type="term" value="C:plasma membrane"/>
    <property type="evidence" value="ECO:0007669"/>
    <property type="project" value="UniProtKB-SubCell"/>
</dbReference>
<dbReference type="GO" id="GO:0008081">
    <property type="term" value="F:phosphoric diester hydrolase activity"/>
    <property type="evidence" value="ECO:0007669"/>
    <property type="project" value="UniProtKB-ARBA"/>
</dbReference>
<dbReference type="GO" id="GO:0007165">
    <property type="term" value="P:signal transduction"/>
    <property type="evidence" value="ECO:0007669"/>
    <property type="project" value="InterPro"/>
</dbReference>
<dbReference type="CDD" id="cd06225">
    <property type="entry name" value="HAMP"/>
    <property type="match status" value="1"/>
</dbReference>
<dbReference type="CDD" id="cd00077">
    <property type="entry name" value="HDc"/>
    <property type="match status" value="1"/>
</dbReference>
<dbReference type="Gene3D" id="6.10.340.10">
    <property type="match status" value="1"/>
</dbReference>
<dbReference type="Gene3D" id="1.10.3210.10">
    <property type="entry name" value="Hypothetical protein af1432"/>
    <property type="match status" value="1"/>
</dbReference>
<dbReference type="InterPro" id="IPR052020">
    <property type="entry name" value="Cyclic_di-GMP/3'3'-cGAMP_PDE"/>
</dbReference>
<dbReference type="InterPro" id="IPR003660">
    <property type="entry name" value="HAMP_dom"/>
</dbReference>
<dbReference type="InterPro" id="IPR003607">
    <property type="entry name" value="HD/PDEase_dom"/>
</dbReference>
<dbReference type="InterPro" id="IPR037522">
    <property type="entry name" value="HD_GYP_dom"/>
</dbReference>
<dbReference type="InterPro" id="IPR048440">
    <property type="entry name" value="MASE10"/>
</dbReference>
<dbReference type="PANTHER" id="PTHR45228">
    <property type="entry name" value="CYCLIC DI-GMP PHOSPHODIESTERASE TM_0186-RELATED"/>
    <property type="match status" value="1"/>
</dbReference>
<dbReference type="PANTHER" id="PTHR45228:SF5">
    <property type="entry name" value="CYCLIC DI-GMP PHOSPHODIESTERASE VC_1348-RELATED"/>
    <property type="match status" value="1"/>
</dbReference>
<dbReference type="Pfam" id="PF00672">
    <property type="entry name" value="HAMP"/>
    <property type="match status" value="1"/>
</dbReference>
<dbReference type="Pfam" id="PF13487">
    <property type="entry name" value="HD_5"/>
    <property type="match status" value="1"/>
</dbReference>
<dbReference type="Pfam" id="PF20970">
    <property type="entry name" value="MASE10"/>
    <property type="match status" value="1"/>
</dbReference>
<dbReference type="SMART" id="SM00304">
    <property type="entry name" value="HAMP"/>
    <property type="match status" value="1"/>
</dbReference>
<dbReference type="SMART" id="SM00471">
    <property type="entry name" value="HDc"/>
    <property type="match status" value="1"/>
</dbReference>
<dbReference type="SUPFAM" id="SSF158472">
    <property type="entry name" value="HAMP domain-like"/>
    <property type="match status" value="1"/>
</dbReference>
<dbReference type="SUPFAM" id="SSF109604">
    <property type="entry name" value="HD-domain/PDEase-like"/>
    <property type="match status" value="1"/>
</dbReference>
<dbReference type="PROSITE" id="PS50885">
    <property type="entry name" value="HAMP"/>
    <property type="match status" value="1"/>
</dbReference>
<dbReference type="PROSITE" id="PS51832">
    <property type="entry name" value="HD_GYP"/>
    <property type="match status" value="1"/>
</dbReference>
<sequence>MTIWVLSLAMKNTIYHAPLTFGLYALAGVLFALYTSRVCPFLATLSTREIATQVGAVFILAWLIRHTLLRQHIWARKQQFIQLDTALLFAMSLPLALYYNLQYQFTLDSNLKVLFGMTLFGFFTGALLQLSSKLRTLRQMPQSQNLALSSDERRSLVKQLIGLIVLLISTLTVMLSMVAIKDIHWLENNPARLLDGSGKISIVKEFAFLSLVLGGYITAILVLWSRMMKEILDHQERSLQAVTQGNLQVRLPVYSNDELGNVAMLTNQMLDSLEATQNEVKTTRDVAIVSLSALAESRDNETGAHILRTQEYVKALAEYLAAFPQYSTLLTPAYIELLYKSAPLHDVGKVGIPDSVLLKPGKLTDEEFTVMKEHPRIGAQALAIAERHLGTSSFLAIAKEIALTHHEKWDGTGYPAQLQGEAIPLSGRLMALADVYDALISARVYKPAFSHDKAKAIIVEGSGHHFDPAVVEAFLAVEEKFVAIAAHFKDAA</sequence>
<organism>
    <name type="scientific">Vibrio cholerae serotype O1 (strain ATCC 39315 / El Tor Inaba N16961)</name>
    <dbReference type="NCBI Taxonomy" id="243277"/>
    <lineage>
        <taxon>Bacteria</taxon>
        <taxon>Pseudomonadati</taxon>
        <taxon>Pseudomonadota</taxon>
        <taxon>Gammaproteobacteria</taxon>
        <taxon>Vibrionales</taxon>
        <taxon>Vibrionaceae</taxon>
        <taxon>Vibrio</taxon>
    </lineage>
</organism>
<comment type="function">
    <text evidence="4">Phosphodiesterase (PDE) that catalyzes the hydrolysis of cyclic diguanylate (c-di-GMP) to GMP in vitro. Increases motility and decreases biofilm formation in vivo.</text>
</comment>
<comment type="catalytic activity">
    <reaction evidence="4">
        <text>3',3'-c-di-GMP + 2 H2O = 2 GMP + 2 H(+)</text>
        <dbReference type="Rhea" id="RHEA:52928"/>
        <dbReference type="ChEBI" id="CHEBI:15377"/>
        <dbReference type="ChEBI" id="CHEBI:15378"/>
        <dbReference type="ChEBI" id="CHEBI:58115"/>
        <dbReference type="ChEBI" id="CHEBI:58805"/>
    </reaction>
</comment>
<comment type="subcellular location">
    <subcellularLocation>
        <location evidence="5">Cell inner membrane</location>
        <topology evidence="1">Multi-pass membrane protein</topology>
    </subcellularLocation>
</comment>
<evidence type="ECO:0000255" key="1"/>
<evidence type="ECO:0000255" key="2">
    <source>
        <dbReference type="PROSITE-ProRule" id="PRU00102"/>
    </source>
</evidence>
<evidence type="ECO:0000255" key="3">
    <source>
        <dbReference type="PROSITE-ProRule" id="PRU01176"/>
    </source>
</evidence>
<evidence type="ECO:0000269" key="4">
    <source>
    </source>
</evidence>
<evidence type="ECO:0000305" key="5"/>
<evidence type="ECO:0000312" key="6">
    <source>
        <dbReference type="EMBL" id="AAF94454.1"/>
    </source>
</evidence>
<name>CDPD1_VIBCH</name>
<feature type="chain" id="PRO_0000439659" description="Cyclic di-GMP phosphodiesterase VC_1295">
    <location>
        <begin position="1"/>
        <end position="492"/>
    </location>
</feature>
<feature type="transmembrane region" description="Helical" evidence="1">
    <location>
        <begin position="14"/>
        <end position="34"/>
    </location>
</feature>
<feature type="transmembrane region" description="Helical" evidence="1">
    <location>
        <begin position="49"/>
        <end position="69"/>
    </location>
</feature>
<feature type="transmembrane region" description="Helical" evidence="1">
    <location>
        <begin position="80"/>
        <end position="100"/>
    </location>
</feature>
<feature type="transmembrane region" description="Helical" evidence="1">
    <location>
        <begin position="111"/>
        <end position="131"/>
    </location>
</feature>
<feature type="transmembrane region" description="Helical" evidence="1">
    <location>
        <begin position="160"/>
        <end position="180"/>
    </location>
</feature>
<feature type="transmembrane region" description="Helical" evidence="1">
    <location>
        <begin position="205"/>
        <end position="225"/>
    </location>
</feature>
<feature type="domain" description="HAMP" evidence="2">
    <location>
        <begin position="226"/>
        <end position="278"/>
    </location>
</feature>
<feature type="domain" description="HD-GYP" evidence="3">
    <location>
        <begin position="280"/>
        <end position="490"/>
    </location>
</feature>
<gene>
    <name evidence="6" type="ordered locus">VC_1295</name>
</gene>
<protein>
    <recommendedName>
        <fullName evidence="5">Cyclic di-GMP phosphodiesterase VC_1295</fullName>
        <ecNumber evidence="4">3.1.4.-</ecNumber>
    </recommendedName>
</protein>
<accession>Q9KSG1</accession>